<comment type="function">
    <text evidence="2">Inactive cytochrome unable to convert L-DOPA to cyclo-DOPA in the betalain pathway and producing a yellow mutant phenotype. A frameshift replaces 108 amino acids of the active protein found in red beets (AC I3PFJ5) with 27 new residues followed by a stop codon.</text>
</comment>
<comment type="pathway">
    <text evidence="4">Pigment biosynthesis; betalain biosynthesis.</text>
</comment>
<comment type="subcellular location">
    <subcellularLocation>
        <location evidence="1">Membrane</location>
        <topology evidence="1">Single-pass membrane protein</topology>
    </subcellularLocation>
</comment>
<comment type="similarity">
    <text evidence="4">Belongs to the cytochrome P450 family.</text>
</comment>
<proteinExistence type="inferred from homology"/>
<evidence type="ECO:0000255" key="1"/>
<evidence type="ECO:0000269" key="2">
    <source>
    </source>
</evidence>
<evidence type="ECO:0000303" key="3">
    <source>
    </source>
</evidence>
<evidence type="ECO:0000305" key="4"/>
<name>C76AN_BETVU</name>
<dbReference type="EMBL" id="HQ656021">
    <property type="status" value="NOT_ANNOTATED_CDS"/>
    <property type="molecule type" value="Genomic_DNA"/>
</dbReference>
<dbReference type="SMR" id="P0DKI2"/>
<dbReference type="PhylomeDB" id="P0DKI2"/>
<dbReference type="UniPathway" id="UPA00278"/>
<dbReference type="GO" id="GO:0016020">
    <property type="term" value="C:membrane"/>
    <property type="evidence" value="ECO:0007669"/>
    <property type="project" value="UniProtKB-SubCell"/>
</dbReference>
<dbReference type="GO" id="GO:0020037">
    <property type="term" value="F:heme binding"/>
    <property type="evidence" value="ECO:0007669"/>
    <property type="project" value="InterPro"/>
</dbReference>
<dbReference type="GO" id="GO:0005506">
    <property type="term" value="F:iron ion binding"/>
    <property type="evidence" value="ECO:0007669"/>
    <property type="project" value="InterPro"/>
</dbReference>
<dbReference type="GO" id="GO:0004497">
    <property type="term" value="F:monooxygenase activity"/>
    <property type="evidence" value="ECO:0007669"/>
    <property type="project" value="InterPro"/>
</dbReference>
<dbReference type="GO" id="GO:0016705">
    <property type="term" value="F:oxidoreductase activity, acting on paired donors, with incorporation or reduction of molecular oxygen"/>
    <property type="evidence" value="ECO:0007669"/>
    <property type="project" value="InterPro"/>
</dbReference>
<dbReference type="Gene3D" id="1.10.630.10">
    <property type="entry name" value="Cytochrome P450"/>
    <property type="match status" value="1"/>
</dbReference>
<dbReference type="InterPro" id="IPR001128">
    <property type="entry name" value="Cyt_P450"/>
</dbReference>
<dbReference type="InterPro" id="IPR002401">
    <property type="entry name" value="Cyt_P450_E_grp-I"/>
</dbReference>
<dbReference type="InterPro" id="IPR036396">
    <property type="entry name" value="Cyt_P450_sf"/>
</dbReference>
<dbReference type="PANTHER" id="PTHR47950:SF12">
    <property type="entry name" value="CYTOCHROME P450 76AD1-LIKE"/>
    <property type="match status" value="1"/>
</dbReference>
<dbReference type="PANTHER" id="PTHR47950">
    <property type="entry name" value="CYTOCHROME P450, FAMILY 76, SUBFAMILY C, POLYPEPTIDE 5-RELATED"/>
    <property type="match status" value="1"/>
</dbReference>
<dbReference type="Pfam" id="PF00067">
    <property type="entry name" value="p450"/>
    <property type="match status" value="1"/>
</dbReference>
<dbReference type="PRINTS" id="PR00463">
    <property type="entry name" value="EP450I"/>
</dbReference>
<dbReference type="PRINTS" id="PR00385">
    <property type="entry name" value="P450"/>
</dbReference>
<dbReference type="SUPFAM" id="SSF48264">
    <property type="entry name" value="Cytochrome P450"/>
    <property type="match status" value="1"/>
</dbReference>
<sequence>MDHATLAMILAIWFISFHFIKLLFSQQTTKLLPPGPKPLPIIGNILEVGKKPHRSFANLAKIHGPLISLRLGSVTTIVVSSADVAKEMFLKKDHPLSNRTIPNSVTAGDHHKLTMSWLPVSPKWRNFRKITAVHLLSPQRLDACQTFRHAKVQQLYEYVQECAQKGQAVDIGKAAFTTSLNLLSKLFFSVELAHHKSHTSQEFKELIWNIMEDIGKPNYADYFPILGCVDPSGIRRRLACSFDKLIAVFQSIICERLAPDSSTATTTTTDDVLDVLLQLFKQNELTMGEINHLLVDIFDAGTDTTSSTFEWVMAELIRNPEMMEKAQEEIKQVLGKDKQIQESDIINLPYLQAIIKETLRLHPPTVFLLPRKADTDVELYGYIVPKDAQIKYLLTYGLLEEILMHGKMLIFFRPKDL</sequence>
<protein>
    <recommendedName>
        <fullName evidence="3">Inactive cytochrome P450 76AD1</fullName>
    </recommendedName>
</protein>
<feature type="chain" id="PRO_0000431984" description="Inactive cytochrome P450 76AD1">
    <location>
        <begin position="1"/>
        <end position="417"/>
    </location>
</feature>
<feature type="transmembrane region" description="Helical" evidence="1">
    <location>
        <begin position="4"/>
        <end position="24"/>
    </location>
</feature>
<reference key="1">
    <citation type="journal article" date="2012" name="Nat. Genet.">
        <title>The beet R locus encodes a new cytochrome P450 required for red betalain production.</title>
        <authorList>
            <person name="Hatlestad G.J."/>
            <person name="Sunnadeniya R.M."/>
            <person name="Akhavan N.A."/>
            <person name="Gonzalez A."/>
            <person name="Goldman I.L."/>
            <person name="McGrath J.M."/>
            <person name="Lloyd A.M."/>
        </authorList>
    </citation>
    <scope>NUCLEOTIDE SEQUENCE [GENOMIC DNA]</scope>
    <scope>FUNCTION</scope>
    <source>
        <strain>cv. US H20</strain>
    </source>
</reference>
<accession>P0DKI2</accession>
<organism>
    <name type="scientific">Beta vulgaris</name>
    <name type="common">Sugar beet</name>
    <dbReference type="NCBI Taxonomy" id="161934"/>
    <lineage>
        <taxon>Eukaryota</taxon>
        <taxon>Viridiplantae</taxon>
        <taxon>Streptophyta</taxon>
        <taxon>Embryophyta</taxon>
        <taxon>Tracheophyta</taxon>
        <taxon>Spermatophyta</taxon>
        <taxon>Magnoliopsida</taxon>
        <taxon>eudicotyledons</taxon>
        <taxon>Gunneridae</taxon>
        <taxon>Pentapetalae</taxon>
        <taxon>Caryophyllales</taxon>
        <taxon>Chenopodiaceae</taxon>
        <taxon>Betoideae</taxon>
        <taxon>Beta</taxon>
    </lineage>
</organism>
<gene>
    <name evidence="3" type="primary">CYP76AD1</name>
</gene>
<keyword id="KW-0472">Membrane</keyword>
<keyword id="KW-0812">Transmembrane</keyword>
<keyword id="KW-1133">Transmembrane helix</keyword>